<proteinExistence type="evidence at protein level"/>
<sequence length="134" mass="15080">MVKEFAGIKYKLDSQTNFEEYMKAIGVGAIERKAGLALSPVIELEILDGDKFKLTSKTAIKNTEFTFKLGEEFDEETLDGRKVKSTITQDGPNKLVHEQKGDHPTIIIREFSKEQCVITIKLGDLVATRIYKAQ</sequence>
<comment type="function">
    <text>Binds fatty acids in a 1:1 molar ratio.</text>
</comment>
<comment type="subunit">
    <text evidence="1">Monomer.</text>
</comment>
<comment type="subcellular location">
    <subcellularLocation>
        <location>Cytoplasm</location>
    </subcellularLocation>
</comment>
<comment type="tissue specificity">
    <text>Adult flight muscle.</text>
</comment>
<comment type="domain">
    <text>Forms a beta-barrel structure that accommodates hydrophobic ligands in its interior.</text>
</comment>
<comment type="similarity">
    <text evidence="4">Belongs to the calycin superfamily. Fatty-acid binding protein (FABP) family.</text>
</comment>
<evidence type="ECO:0000250" key="1"/>
<evidence type="ECO:0000250" key="2">
    <source>
        <dbReference type="UniProtKB" id="P41509"/>
    </source>
</evidence>
<evidence type="ECO:0000269" key="3">
    <source>
    </source>
</evidence>
<evidence type="ECO:0000305" key="4"/>
<evidence type="ECO:0007829" key="5">
    <source>
        <dbReference type="PDB" id="1FTP"/>
    </source>
</evidence>
<dbReference type="EMBL" id="M95918">
    <property type="protein sequence ID" value="AAA19622.1"/>
    <property type="status" value="ALT_SEQ"/>
    <property type="molecule type" value="mRNA"/>
</dbReference>
<dbReference type="EMBL" id="AF244981">
    <property type="protein sequence ID" value="AAK20174.1"/>
    <property type="molecule type" value="Genomic_DNA"/>
</dbReference>
<dbReference type="EMBL" id="AF244980">
    <property type="protein sequence ID" value="AAK20174.1"/>
    <property type="status" value="JOINED"/>
    <property type="molecule type" value="Genomic_DNA"/>
</dbReference>
<dbReference type="PIR" id="A44870">
    <property type="entry name" value="A44870"/>
</dbReference>
<dbReference type="RefSeq" id="XP_049839815.1">
    <property type="nucleotide sequence ID" value="XM_049983858.1"/>
</dbReference>
<dbReference type="PDB" id="1FTP">
    <property type="method" value="X-ray"/>
    <property type="resolution" value="2.20 A"/>
    <property type="chains" value="A/B=2-134"/>
</dbReference>
<dbReference type="PDBsum" id="1FTP"/>
<dbReference type="BMRB" id="P41496"/>
<dbReference type="SMR" id="P41496"/>
<dbReference type="EnsemblMetazoa" id="XM_049983858.1">
    <property type="protein sequence ID" value="XP_049839815.1"/>
    <property type="gene ID" value="LOC126284723"/>
</dbReference>
<dbReference type="GeneID" id="126284723"/>
<dbReference type="OrthoDB" id="354351at2759"/>
<dbReference type="EvolutionaryTrace" id="P41496"/>
<dbReference type="GO" id="GO:0005737">
    <property type="term" value="C:cytoplasm"/>
    <property type="evidence" value="ECO:0007669"/>
    <property type="project" value="UniProtKB-SubCell"/>
</dbReference>
<dbReference type="GO" id="GO:0008289">
    <property type="term" value="F:lipid binding"/>
    <property type="evidence" value="ECO:0007669"/>
    <property type="project" value="UniProtKB-KW"/>
</dbReference>
<dbReference type="CDD" id="cd19852">
    <property type="entry name" value="FABP_pancrustacea"/>
    <property type="match status" value="1"/>
</dbReference>
<dbReference type="FunFam" id="2.40.128.20:FF:000001">
    <property type="entry name" value="Fatty acid-binding protein, adipocyte"/>
    <property type="match status" value="1"/>
</dbReference>
<dbReference type="Gene3D" id="2.40.128.20">
    <property type="match status" value="1"/>
</dbReference>
<dbReference type="InterPro" id="IPR012674">
    <property type="entry name" value="Calycin"/>
</dbReference>
<dbReference type="InterPro" id="IPR000463">
    <property type="entry name" value="Fatty_acid-bd"/>
</dbReference>
<dbReference type="InterPro" id="IPR031259">
    <property type="entry name" value="ILBP"/>
</dbReference>
<dbReference type="InterPro" id="IPR000566">
    <property type="entry name" value="Lipocln_cytosolic_FA-bd_dom"/>
</dbReference>
<dbReference type="PANTHER" id="PTHR11955">
    <property type="entry name" value="FATTY ACID BINDING PROTEIN"/>
    <property type="match status" value="1"/>
</dbReference>
<dbReference type="Pfam" id="PF00061">
    <property type="entry name" value="Lipocalin"/>
    <property type="match status" value="1"/>
</dbReference>
<dbReference type="PRINTS" id="PR00178">
    <property type="entry name" value="FATTYACIDBP"/>
</dbReference>
<dbReference type="SUPFAM" id="SSF50814">
    <property type="entry name" value="Lipocalins"/>
    <property type="match status" value="1"/>
</dbReference>
<dbReference type="PROSITE" id="PS00214">
    <property type="entry name" value="FABP"/>
    <property type="match status" value="1"/>
</dbReference>
<reference key="1">
    <citation type="journal article" date="1992" name="Arch. Biochem. Biophys.">
        <title>Primary structure of locust flight muscle fatty acid binding protein.</title>
        <authorList>
            <person name="Price H.M."/>
            <person name="Ryan R.O."/>
            <person name="Haunerland N.H."/>
        </authorList>
    </citation>
    <scope>NUCLEOTIDE SEQUENCE [MRNA] OF 17-134</scope>
    <scope>PROTEIN SEQUENCE OF 2-40</scope>
    <source>
        <tissue>Flight muscle</tissue>
    </source>
</reference>
<reference key="2">
    <citation type="journal article" date="2001" name="Insect Biochem. Mol. Biol.">
        <title>Cloning and sequence of the gene encoding the muscle fatty acid binding protein from the desert locust, Schistocerca gregaria.</title>
        <authorList>
            <person name="Wu Q."/>
            <person name="Andolfatto P."/>
            <person name="Haunerland N.H."/>
        </authorList>
    </citation>
    <scope>NUCLEOTIDE SEQUENCE [GENOMIC DNA]</scope>
</reference>
<reference key="3">
    <citation type="journal article" date="1994" name="Biochemistry">
        <title>Three-dimensional structure of the muscle fatty-acid-binding protein isolated from the desert locust Schistocerca gregaria.</title>
        <authorList>
            <person name="Haunerland N.H."/>
            <person name="Jacobson B.L."/>
            <person name="Wesenberg G."/>
            <person name="Rayment I."/>
            <person name="Holden H.M."/>
        </authorList>
    </citation>
    <scope>X-RAY CRYSTALLOGRAPHY (2.2 ANGSTROMS)</scope>
</reference>
<accession>P41496</accession>
<name>FABPM_SCHGR</name>
<protein>
    <recommendedName>
        <fullName>Fatty acid-binding protein, muscle</fullName>
    </recommendedName>
    <alternativeName>
        <fullName>M-FABP</fullName>
    </alternativeName>
</protein>
<feature type="initiator methionine" description="Removed" evidence="3">
    <location>
        <position position="1"/>
    </location>
</feature>
<feature type="chain" id="PRO_0000067364" description="Fatty acid-binding protein, muscle">
    <location>
        <begin position="2"/>
        <end position="134"/>
    </location>
</feature>
<feature type="binding site" evidence="2">
    <location>
        <position position="109"/>
    </location>
    <ligand>
        <name>(9Z)-octadecenoate</name>
        <dbReference type="ChEBI" id="CHEBI:30823"/>
    </ligand>
</feature>
<feature type="binding site" evidence="2">
    <location>
        <begin position="129"/>
        <end position="131"/>
    </location>
    <ligand>
        <name>(9Z)-octadecenoate</name>
        <dbReference type="ChEBI" id="CHEBI:30823"/>
    </ligand>
</feature>
<feature type="helix" evidence="5">
    <location>
        <begin position="3"/>
        <end position="5"/>
    </location>
</feature>
<feature type="strand" evidence="5">
    <location>
        <begin position="9"/>
        <end position="17"/>
    </location>
</feature>
<feature type="helix" evidence="5">
    <location>
        <begin position="18"/>
        <end position="24"/>
    </location>
</feature>
<feature type="helix" evidence="5">
    <location>
        <begin position="29"/>
        <end position="35"/>
    </location>
</feature>
<feature type="strand" evidence="5">
    <location>
        <begin position="41"/>
        <end position="46"/>
    </location>
</feature>
<feature type="strand" evidence="5">
    <location>
        <begin position="48"/>
        <end position="57"/>
    </location>
</feature>
<feature type="strand" evidence="5">
    <location>
        <begin position="62"/>
        <end position="68"/>
    </location>
</feature>
<feature type="strand" evidence="5">
    <location>
        <begin position="73"/>
        <end position="76"/>
    </location>
</feature>
<feature type="strand" evidence="5">
    <location>
        <begin position="82"/>
        <end position="89"/>
    </location>
</feature>
<feature type="strand" evidence="5">
    <location>
        <begin position="91"/>
        <end position="99"/>
    </location>
</feature>
<feature type="strand" evidence="5">
    <location>
        <begin position="101"/>
        <end position="103"/>
    </location>
</feature>
<feature type="strand" evidence="5">
    <location>
        <begin position="105"/>
        <end position="111"/>
    </location>
</feature>
<feature type="strand" evidence="5">
    <location>
        <begin position="113"/>
        <end position="122"/>
    </location>
</feature>
<feature type="strand" evidence="5">
    <location>
        <begin position="125"/>
        <end position="133"/>
    </location>
</feature>
<keyword id="KW-0002">3D-structure</keyword>
<keyword id="KW-0963">Cytoplasm</keyword>
<keyword id="KW-0903">Direct protein sequencing</keyword>
<keyword id="KW-0446">Lipid-binding</keyword>
<keyword id="KW-0813">Transport</keyword>
<organism>
    <name type="scientific">Schistocerca gregaria</name>
    <name type="common">Desert locust</name>
    <name type="synonym">Gryllus gregarius</name>
    <dbReference type="NCBI Taxonomy" id="7010"/>
    <lineage>
        <taxon>Eukaryota</taxon>
        <taxon>Metazoa</taxon>
        <taxon>Ecdysozoa</taxon>
        <taxon>Arthropoda</taxon>
        <taxon>Hexapoda</taxon>
        <taxon>Insecta</taxon>
        <taxon>Pterygota</taxon>
        <taxon>Neoptera</taxon>
        <taxon>Polyneoptera</taxon>
        <taxon>Orthoptera</taxon>
        <taxon>Caelifera</taxon>
        <taxon>Acrididea</taxon>
        <taxon>Acridomorpha</taxon>
        <taxon>Acridoidea</taxon>
        <taxon>Acrididae</taxon>
        <taxon>Cyrtacanthacridinae</taxon>
        <taxon>Schistocerca</taxon>
    </lineage>
</organism>